<gene>
    <name type="primary">JGL</name>
    <name type="synonym">NUB</name>
    <name type="ordered locus">At1g13400</name>
    <name type="ORF">T6J4.23</name>
</gene>
<dbReference type="EMBL" id="AY465923">
    <property type="protein sequence ID" value="AAR30035.1"/>
    <property type="molecule type" value="mRNA"/>
</dbReference>
<dbReference type="EMBL" id="AC011810">
    <property type="status" value="NOT_ANNOTATED_CDS"/>
    <property type="molecule type" value="Genomic_DNA"/>
</dbReference>
<dbReference type="EMBL" id="CP002684">
    <property type="protein sequence ID" value="AEE29012.1"/>
    <property type="molecule type" value="Genomic_DNA"/>
</dbReference>
<dbReference type="RefSeq" id="NP_172797.2">
    <property type="nucleotide sequence ID" value="NM_101210.3"/>
</dbReference>
<dbReference type="SMR" id="Q6S592"/>
<dbReference type="BioGRID" id="23140">
    <property type="interactions" value="3"/>
</dbReference>
<dbReference type="IntAct" id="Q6S592">
    <property type="interactions" value="16"/>
</dbReference>
<dbReference type="STRING" id="3702.Q6S592"/>
<dbReference type="PaxDb" id="3702-AT1G13400.1"/>
<dbReference type="ProteomicsDB" id="238986"/>
<dbReference type="EnsemblPlants" id="AT1G13400.1">
    <property type="protein sequence ID" value="AT1G13400.1"/>
    <property type="gene ID" value="AT1G13400"/>
</dbReference>
<dbReference type="GeneID" id="837900"/>
<dbReference type="Gramene" id="AT1G13400.1">
    <property type="protein sequence ID" value="AT1G13400.1"/>
    <property type="gene ID" value="AT1G13400"/>
</dbReference>
<dbReference type="KEGG" id="ath:AT1G13400"/>
<dbReference type="Araport" id="AT1G13400"/>
<dbReference type="TAIR" id="AT1G13400">
    <property type="gene designation" value="NUB"/>
</dbReference>
<dbReference type="eggNOG" id="ENOG502QUI4">
    <property type="taxonomic scope" value="Eukaryota"/>
</dbReference>
<dbReference type="HOGENOM" id="CLU_062933_0_0_1"/>
<dbReference type="InParanoid" id="Q6S592"/>
<dbReference type="OMA" id="GFREKHI"/>
<dbReference type="PhylomeDB" id="Q6S592"/>
<dbReference type="PRO" id="PR:Q6S592"/>
<dbReference type="Proteomes" id="UP000006548">
    <property type="component" value="Chromosome 1"/>
</dbReference>
<dbReference type="ExpressionAtlas" id="Q6S592">
    <property type="expression patterns" value="baseline and differential"/>
</dbReference>
<dbReference type="GO" id="GO:0005634">
    <property type="term" value="C:nucleus"/>
    <property type="evidence" value="ECO:0007669"/>
    <property type="project" value="UniProtKB-SubCell"/>
</dbReference>
<dbReference type="GO" id="GO:0003700">
    <property type="term" value="F:DNA-binding transcription factor activity"/>
    <property type="evidence" value="ECO:0007669"/>
    <property type="project" value="InterPro"/>
</dbReference>
<dbReference type="GO" id="GO:0008270">
    <property type="term" value="F:zinc ion binding"/>
    <property type="evidence" value="ECO:0007669"/>
    <property type="project" value="UniProtKB-KW"/>
</dbReference>
<dbReference type="GO" id="GO:0048653">
    <property type="term" value="P:anther development"/>
    <property type="evidence" value="ECO:0000316"/>
    <property type="project" value="TAIR"/>
</dbReference>
<dbReference type="GO" id="GO:0048440">
    <property type="term" value="P:carpel development"/>
    <property type="evidence" value="ECO:0000316"/>
    <property type="project" value="TAIR"/>
</dbReference>
<dbReference type="GO" id="GO:0030154">
    <property type="term" value="P:cell differentiation"/>
    <property type="evidence" value="ECO:0007669"/>
    <property type="project" value="UniProtKB-KW"/>
</dbReference>
<dbReference type="GO" id="GO:0048443">
    <property type="term" value="P:stamen development"/>
    <property type="evidence" value="ECO:0000316"/>
    <property type="project" value="TAIR"/>
</dbReference>
<dbReference type="FunFam" id="3.30.160.60:FF:002425">
    <property type="entry name" value="Zinc finger protein STAMENLESS 1"/>
    <property type="match status" value="1"/>
</dbReference>
<dbReference type="Gene3D" id="3.30.160.60">
    <property type="entry name" value="Classic Zinc Finger"/>
    <property type="match status" value="1"/>
</dbReference>
<dbReference type="InterPro" id="IPR045320">
    <property type="entry name" value="JAGGED/SL1-like"/>
</dbReference>
<dbReference type="InterPro" id="IPR036236">
    <property type="entry name" value="Znf_C2H2_sf"/>
</dbReference>
<dbReference type="InterPro" id="IPR013087">
    <property type="entry name" value="Znf_C2H2_type"/>
</dbReference>
<dbReference type="PANTHER" id="PTHR45730">
    <property type="entry name" value="ZINC FINGER PROTEIN JAGGED"/>
    <property type="match status" value="1"/>
</dbReference>
<dbReference type="PANTHER" id="PTHR45730:SF110">
    <property type="entry name" value="ZINC FINGER PROTEIN JAGGED-LIKE"/>
    <property type="match status" value="1"/>
</dbReference>
<dbReference type="SUPFAM" id="SSF57667">
    <property type="entry name" value="beta-beta-alpha zinc fingers"/>
    <property type="match status" value="1"/>
</dbReference>
<dbReference type="PROSITE" id="PS00028">
    <property type="entry name" value="ZINC_FINGER_C2H2_1"/>
    <property type="match status" value="1"/>
</dbReference>
<dbReference type="PROSITE" id="PS50157">
    <property type="entry name" value="ZINC_FINGER_C2H2_2"/>
    <property type="match status" value="1"/>
</dbReference>
<sequence>MRADENNTLDLNNLPDDPSRDIFPFFEEGFSSSSSSGGFREKQTKDGKEYECRFCSLKFFKSQALGGHMNRHRQERETESLNKARELVLRNDSFPPHQGPPSFSYHQGDVHIGDLTQFKPMMYPPRHFSLPGSSSILQLQPPYLYPPLSSPFPQHNTNIGNNGTRHQTLTNSVCGGRALPDSSYTFIGAPVANGSRVAPHLPPHHGL</sequence>
<evidence type="ECO:0000255" key="1">
    <source>
        <dbReference type="PROSITE-ProRule" id="PRU00042"/>
    </source>
</evidence>
<evidence type="ECO:0000256" key="2">
    <source>
        <dbReference type="SAM" id="MobiDB-lite"/>
    </source>
</evidence>
<evidence type="ECO:0000269" key="3">
    <source>
    </source>
</evidence>
<evidence type="ECO:0000269" key="4">
    <source>
    </source>
</evidence>
<evidence type="ECO:0000305" key="5"/>
<protein>
    <recommendedName>
        <fullName>Zinc finger protein JAGGED-like</fullName>
    </recommendedName>
    <alternativeName>
        <fullName>Zinc finger protein NUBBIN</fullName>
    </alternativeName>
</protein>
<accession>Q6S592</accession>
<keyword id="KW-0217">Developmental protein</keyword>
<keyword id="KW-0221">Differentiation</keyword>
<keyword id="KW-0479">Metal-binding</keyword>
<keyword id="KW-0539">Nucleus</keyword>
<keyword id="KW-1185">Reference proteome</keyword>
<keyword id="KW-0862">Zinc</keyword>
<keyword id="KW-0863">Zinc-finger</keyword>
<name>JGL_ARATH</name>
<proteinExistence type="evidence at transcript level"/>
<comment type="function">
    <text evidence="4">Acts with JAG to promote growth and patterning in stamens and carpels. Promotes the growth of the abaxial and adaxial sides of floral organs. Promotes the growth of the pollen-bearing microsporangia in anthers, the carpel walls of the gynoecium and the establishment of the correct number of cell layers in carpel walls. Promotes leaf blade growth and trichome development.</text>
</comment>
<comment type="subcellular location">
    <subcellularLocation>
        <location evidence="5">Nucleus</location>
    </subcellularLocation>
</comment>
<comment type="tissue specificity">
    <text evidence="3 4">Expressed in the emerging leaf, stamen and carpel primordia. Not expressed in the apical shoot meristem (SAM).</text>
</comment>
<comment type="disruption phenotype">
    <text evidence="4">No visible phenotype under normal growth condition.</text>
</comment>
<reference key="1">
    <citation type="journal article" date="2004" name="Development">
        <title>The role of JAGGED in shaping lateral organs.</title>
        <authorList>
            <person name="Dinneny J.R."/>
            <person name="Yadegari R."/>
            <person name="Fischer R.L."/>
            <person name="Yanofsky M.F."/>
            <person name="Weigel D."/>
        </authorList>
    </citation>
    <scope>NUCLEOTIDE SEQUENCE [MRNA]</scope>
    <scope>TISSUE SPECIFICITY</scope>
    <source>
        <strain>cv. Columbia</strain>
    </source>
</reference>
<reference key="2">
    <citation type="journal article" date="2000" name="Nature">
        <title>Sequence and analysis of chromosome 1 of the plant Arabidopsis thaliana.</title>
        <authorList>
            <person name="Theologis A."/>
            <person name="Ecker J.R."/>
            <person name="Palm C.J."/>
            <person name="Federspiel N.A."/>
            <person name="Kaul S."/>
            <person name="White O."/>
            <person name="Alonso J."/>
            <person name="Altafi H."/>
            <person name="Araujo R."/>
            <person name="Bowman C.L."/>
            <person name="Brooks S.Y."/>
            <person name="Buehler E."/>
            <person name="Chan A."/>
            <person name="Chao Q."/>
            <person name="Chen H."/>
            <person name="Cheuk R.F."/>
            <person name="Chin C.W."/>
            <person name="Chung M.K."/>
            <person name="Conn L."/>
            <person name="Conway A.B."/>
            <person name="Conway A.R."/>
            <person name="Creasy T.H."/>
            <person name="Dewar K."/>
            <person name="Dunn P."/>
            <person name="Etgu P."/>
            <person name="Feldblyum T.V."/>
            <person name="Feng J.-D."/>
            <person name="Fong B."/>
            <person name="Fujii C.Y."/>
            <person name="Gill J.E."/>
            <person name="Goldsmith A.D."/>
            <person name="Haas B."/>
            <person name="Hansen N.F."/>
            <person name="Hughes B."/>
            <person name="Huizar L."/>
            <person name="Hunter J.L."/>
            <person name="Jenkins J."/>
            <person name="Johnson-Hopson C."/>
            <person name="Khan S."/>
            <person name="Khaykin E."/>
            <person name="Kim C.J."/>
            <person name="Koo H.L."/>
            <person name="Kremenetskaia I."/>
            <person name="Kurtz D.B."/>
            <person name="Kwan A."/>
            <person name="Lam B."/>
            <person name="Langin-Hooper S."/>
            <person name="Lee A."/>
            <person name="Lee J.M."/>
            <person name="Lenz C.A."/>
            <person name="Li J.H."/>
            <person name="Li Y.-P."/>
            <person name="Lin X."/>
            <person name="Liu S.X."/>
            <person name="Liu Z.A."/>
            <person name="Luros J.S."/>
            <person name="Maiti R."/>
            <person name="Marziali A."/>
            <person name="Militscher J."/>
            <person name="Miranda M."/>
            <person name="Nguyen M."/>
            <person name="Nierman W.C."/>
            <person name="Osborne B.I."/>
            <person name="Pai G."/>
            <person name="Peterson J."/>
            <person name="Pham P.K."/>
            <person name="Rizzo M."/>
            <person name="Rooney T."/>
            <person name="Rowley D."/>
            <person name="Sakano H."/>
            <person name="Salzberg S.L."/>
            <person name="Schwartz J.R."/>
            <person name="Shinn P."/>
            <person name="Southwick A.M."/>
            <person name="Sun H."/>
            <person name="Tallon L.J."/>
            <person name="Tambunga G."/>
            <person name="Toriumi M.J."/>
            <person name="Town C.D."/>
            <person name="Utterback T."/>
            <person name="Van Aken S."/>
            <person name="Vaysberg M."/>
            <person name="Vysotskaia V.S."/>
            <person name="Walker M."/>
            <person name="Wu D."/>
            <person name="Yu G."/>
            <person name="Fraser C.M."/>
            <person name="Venter J.C."/>
            <person name="Davis R.W."/>
        </authorList>
    </citation>
    <scope>NUCLEOTIDE SEQUENCE [LARGE SCALE GENOMIC DNA]</scope>
    <source>
        <strain>cv. Columbia</strain>
    </source>
</reference>
<reference key="3">
    <citation type="journal article" date="2017" name="Plant J.">
        <title>Araport11: a complete reannotation of the Arabidopsis thaliana reference genome.</title>
        <authorList>
            <person name="Cheng C.Y."/>
            <person name="Krishnakumar V."/>
            <person name="Chan A.P."/>
            <person name="Thibaud-Nissen F."/>
            <person name="Schobel S."/>
            <person name="Town C.D."/>
        </authorList>
    </citation>
    <scope>GENOME REANNOTATION</scope>
    <source>
        <strain>cv. Columbia</strain>
    </source>
</reference>
<reference key="4">
    <citation type="journal article" date="2006" name="Development">
        <title>NUBBIN and JAGGED define stamen and carpel shape in Arabidopsis.</title>
        <authorList>
            <person name="Dinneny J.R."/>
            <person name="Weigel D."/>
            <person name="Yanofsky M.F."/>
        </authorList>
    </citation>
    <scope>FUNCTION</scope>
    <scope>TISSUE SPECIFICITY</scope>
    <scope>DISRUPTION PHENOTYPE</scope>
</reference>
<feature type="chain" id="PRO_0000407989" description="Zinc finger protein JAGGED-like">
    <location>
        <begin position="1"/>
        <end position="207"/>
    </location>
</feature>
<feature type="zinc finger region" description="C2H2-type" evidence="1">
    <location>
        <begin position="50"/>
        <end position="72"/>
    </location>
</feature>
<feature type="region of interest" description="Disordered" evidence="2">
    <location>
        <begin position="1"/>
        <end position="20"/>
    </location>
</feature>
<feature type="compositionally biased region" description="Low complexity" evidence="2">
    <location>
        <begin position="1"/>
        <end position="16"/>
    </location>
</feature>
<organism>
    <name type="scientific">Arabidopsis thaliana</name>
    <name type="common">Mouse-ear cress</name>
    <dbReference type="NCBI Taxonomy" id="3702"/>
    <lineage>
        <taxon>Eukaryota</taxon>
        <taxon>Viridiplantae</taxon>
        <taxon>Streptophyta</taxon>
        <taxon>Embryophyta</taxon>
        <taxon>Tracheophyta</taxon>
        <taxon>Spermatophyta</taxon>
        <taxon>Magnoliopsida</taxon>
        <taxon>eudicotyledons</taxon>
        <taxon>Gunneridae</taxon>
        <taxon>Pentapetalae</taxon>
        <taxon>rosids</taxon>
        <taxon>malvids</taxon>
        <taxon>Brassicales</taxon>
        <taxon>Brassicaceae</taxon>
        <taxon>Camelineae</taxon>
        <taxon>Arabidopsis</taxon>
    </lineage>
</organism>